<keyword id="KW-0025">Alternative splicing</keyword>
<keyword id="KW-0325">Glycoprotein</keyword>
<keyword id="KW-0472">Membrane</keyword>
<keyword id="KW-1267">Proteomics identification</keyword>
<keyword id="KW-1185">Reference proteome</keyword>
<keyword id="KW-0812">Transmembrane</keyword>
<keyword id="KW-1133">Transmembrane helix</keyword>
<comment type="function">
    <text evidence="3 4">May play a role in tumorigenesis of colorectal carcinomas with high microsatellite instability (MSI-H).</text>
</comment>
<comment type="interaction">
    <interactant intactId="EBI-17616589">
        <id>A6NKB5-5</id>
    </interactant>
    <interactant intactId="EBI-2813554">
        <id>Q8WTS1</id>
        <label>ABHD5</label>
    </interactant>
    <organismsDiffer>false</organismsDiffer>
    <experiments>3</experiments>
</comment>
<comment type="interaction">
    <interactant intactId="EBI-17616589">
        <id>A6NKB5-5</id>
    </interactant>
    <interactant intactId="EBI-1054848">
        <id>Q9P0S3</id>
        <label>ORMDL1</label>
    </interactant>
    <organismsDiffer>false</organismsDiffer>
    <experiments>3</experiments>
</comment>
<comment type="interaction">
    <interactant intactId="EBI-17616589">
        <id>A6NKB5-5</id>
    </interactant>
    <interactant intactId="EBI-8644112">
        <id>Q9BRI3</id>
        <label>SLC30A2</label>
    </interactant>
    <organismsDiffer>false</organismsDiffer>
    <experiments>3</experiments>
</comment>
<comment type="subcellular location">
    <subcellularLocation>
        <location evidence="10">Membrane</location>
        <topology evidence="10">Multi-pass membrane protein</topology>
    </subcellularLocation>
</comment>
<comment type="alternative products">
    <event type="alternative splicing"/>
    <isoform>
        <id>A6NKB5-1</id>
        <name>1</name>
        <sequence type="displayed"/>
    </isoform>
    <isoform>
        <id>A6NKB5-2</id>
        <name>2</name>
        <sequence type="described" ref="VSP_033607 VSP_033608 VSP_033609"/>
    </isoform>
    <isoform>
        <id>A6NKB5-3</id>
        <name>3</name>
        <sequence type="described" ref="VSP_033606 VSP_033610 VSP_033611"/>
    </isoform>
    <isoform>
        <id>A6NKB5-5</id>
        <name>5</name>
        <sequence type="described" ref="VSP_035048 VSP_035049 VSP_035050"/>
    </isoform>
    <isoform>
        <id>A6NKB5-4</id>
        <name>4</name>
        <sequence type="described" ref="VSP_033605"/>
    </isoform>
</comment>
<comment type="miscellaneous">
    <text>PCNXL2 is characterized by high mutational frequencies and biallelic mutations in MSI-H colorectal tumors, and is thus likely to be a target gene in these tumors.</text>
</comment>
<comment type="similarity">
    <text evidence="10">Belongs to the pecanex family.</text>
</comment>
<comment type="sequence caution" evidence="10">
    <conflict type="erroneous initiation">
        <sequence resource="EMBL-CDS" id="BAA23708"/>
    </conflict>
</comment>
<comment type="sequence caution" evidence="10">
    <conflict type="erroneous initiation">
        <sequence resource="EMBL-CDS" id="BAB84904"/>
    </conflict>
</comment>
<gene>
    <name evidence="11" type="primary">PCNX2</name>
    <name type="synonym">KIAA0435</name>
    <name type="synonym">PCNXL2</name>
</gene>
<sequence>MVSQVLQLLRQGVWAALTGGWYHDPEQSKFTNSCHLYLWLFLLLLPLALHLAFPPNAIIVFFYCSAVTIFFTIIKLVSYRLHLMFDKGEVIQQKPSRKEEKPNKDKEAKGEHITNHRNPSNNRQIHNGKKEEASRNLSTPPLRCSSRGQSITSHHSSGPLELSAQETVEDLKGVILLEDHPIAPVSSTSPGIKVESLPASQAHMLETTTKSVIPVKPVATETLINGKGKERGGKGQPPLRHRSEGGLVDKGPLKKLPHLSLSQYDLLETDVSFQPWGSENSVLIPEPVSCPRGSIRERVQSKSPQDSLSSSCPQCDTIVAKPVEEPADTSCQVDTSCQGDLPLHQEVDSSDSEVAVTLIDTSQPGDPLSLHEPIKIVITMSSTPNSMTDLESSLHLRVVGTEKTSVKSDAEPTNPGAAGSPNAEQISIPVITLDLPEGGGGGVPCPEGNGSERTPERLKTRVSTNQCSGYGSGEGGNAIKDHSSSSREPWESVSRLTPDTGSESKVGKEGQTNLDPSSCKSSHEKRHARVLSVDSGTDVFLSKSSAEIVNDTEKTMPTSKSDLEAKEGQMPNESNFLEFVSLLESINTSKMTASSQLNGSAEQNEESGLLRDNCSQEKKEEILENEKPSGHSSKQGKPDLQSQDHTSTGPACTQPAKTTAFFQGNRQRQIIYRVTSQQDSSVLQVISGPETSVQEEISVDAMHVFIDEHGEIRSCYLKSGNQKEGPLQPLPSNNDCLSQAREMQVSSSSTTTSESQDPSSGDPAVSALQQQLLLMVARRTQSETPRHVSQDLEASSCSSTQGKFNREQFYKFIIFPGKWIKVWYDRLTLLALLDRTEDIKENVLAILLIVLVSLLGFLTLSQGFCKDMWVLLFCLVMASCQYSLLKSVQPDPASPIHGHNQIITYSRPIYFCVLCGLILLLDTGAKARHPPSYVVYGLKLFSPVFLQSARDYLIVFLYCFPAISLLGLFPQINTFCTYLLEQIDMLFFGGSAVSGITSAVYSVARSVLAAALLHAVCFSAVKEPWSMQHIPALFSAFCGLLVALSYHLSRQSSDPSVLMSFIQCRLFPKFLHQNLAESAADPLPKKMKDSVTDVLKWDLIVCAVVAVLSFAVSASTVFLSLRPFLSIVLFALAGAVGFVTHYVLPQLRKHHPWMWISHPILKNKEYHQREVRDVAHLMWFERLYVWLQCFEKYILYPALILNALTIDAFLISNHRRLGTHWDIFLMIIAGMKLLRTSFCNPVYQFINLSFTVIFFHFDYKDISESFLLDFFMVSILFSKLGDLLHKLQFVLTYVAPWQMAWGSSFHVFAQLFAIPHSAMLFFQTIATSIFSTPLSPFLGSVIFITSYVRPVKFWEKNYNTRRVDNSNTRLAVQIERDPGNDDNNLNSIFYEHLTRTLQESLCGDLVLGRWGNYSSGDCFILASDDLNAFVHLIEIGNGLVTFQLRGLEFRGTYCQQREVEAIMEGDEEDRGCCCCKPGHLPHLLSCNAAFHLRWLTWEITQTQYILEGYSILDNNAATMLQVFDLRRILIRYYIKSIIYYMVTSPKLLSWIKNESLLKSLQPFAKWHYIERDLAMFNINIDDDYVPCLQGITRASFCNVYLEWIQHCARKRQEPSTTLDSDEDSPLVTLSFALCTLGRRALGTAAHNMAISLDSFLYGLHVLFKGDFRITARDEWVFADMDLLHKVVAPAIRMSLKLHQDQFTCPDEYEDPAVLYEAIQSFEKKVVICHEGDPAWRGAVLSNKEELLTLRHVVDEGADEYKVIMLHRSFLSFKVIKVNKECVRGLWAGQQQELIFLRNRNPERGSIQNNKQVLRNLINSSCDQPLGYPMYVSPLTTSYLGTHRQLKNIWGGPITLDRIRTWFWTKWVRMRKDCNARQHSGGNIEDVDGGGAPTTGGNNAPSGGSQESSAEQPRKGGAQHGVSSCEGTQRTGRRKGRSQSVQAHSALSQRPPMLSSSGPILESRQTFLQTSTSVHELAQRLSGSRLSLHASATSLHSQPPPVTTTGHLSVRERAEALIRSSLGSSTSSTLSFLFGKRSFSSALVISGLSAAEGGNTSDTQSSSSVNIVMGPSARAASQATRHLSEPCEPPDATEQGQLHDRCLAEAVADTLGVVCRRASQEDMGLDDTASQQSVSDEQ</sequence>
<proteinExistence type="evidence at protein level"/>
<name>PCX2_HUMAN</name>
<feature type="chain" id="PRO_0000333965" description="Pecanex-like protein 2">
    <location>
        <begin position="1"/>
        <end position="2137"/>
    </location>
</feature>
<feature type="transmembrane region" description="Helical" evidence="1">
    <location>
        <begin position="34"/>
        <end position="54"/>
    </location>
</feature>
<feature type="transmembrane region" description="Helical" evidence="1">
    <location>
        <begin position="57"/>
        <end position="77"/>
    </location>
</feature>
<feature type="transmembrane region" description="Helical" evidence="1">
    <location>
        <begin position="844"/>
        <end position="864"/>
    </location>
</feature>
<feature type="transmembrane region" description="Helical" evidence="1">
    <location>
        <begin position="868"/>
        <end position="888"/>
    </location>
</feature>
<feature type="transmembrane region" description="Helical" evidence="1">
    <location>
        <begin position="901"/>
        <end position="921"/>
    </location>
</feature>
<feature type="transmembrane region" description="Helical" evidence="1">
    <location>
        <begin position="952"/>
        <end position="972"/>
    </location>
</feature>
<feature type="transmembrane region" description="Helical" evidence="1">
    <location>
        <begin position="983"/>
        <end position="1003"/>
    </location>
</feature>
<feature type="transmembrane region" description="Helical" evidence="1">
    <location>
        <begin position="1029"/>
        <end position="1049"/>
    </location>
</feature>
<feature type="transmembrane region" description="Helical" evidence="1">
    <location>
        <begin position="1099"/>
        <end position="1119"/>
    </location>
</feature>
<feature type="transmembrane region" description="Helical" evidence="1">
    <location>
        <begin position="1124"/>
        <end position="1144"/>
    </location>
</feature>
<feature type="transmembrane region" description="Helical" evidence="1">
    <location>
        <begin position="1193"/>
        <end position="1213"/>
    </location>
</feature>
<feature type="transmembrane region" description="Helical" evidence="1">
    <location>
        <begin position="1237"/>
        <end position="1257"/>
    </location>
</feature>
<feature type="transmembrane region" description="Helical" evidence="1">
    <location>
        <begin position="1265"/>
        <end position="1285"/>
    </location>
</feature>
<feature type="transmembrane region" description="Helical" evidence="1">
    <location>
        <begin position="1302"/>
        <end position="1322"/>
    </location>
</feature>
<feature type="transmembrane region" description="Helical" evidence="1">
    <location>
        <begin position="1324"/>
        <end position="1344"/>
    </location>
</feature>
<feature type="region of interest" description="Disordered" evidence="2">
    <location>
        <begin position="92"/>
        <end position="163"/>
    </location>
</feature>
<feature type="region of interest" description="Disordered" evidence="2">
    <location>
        <begin position="225"/>
        <end position="251"/>
    </location>
</feature>
<feature type="region of interest" description="Disordered" evidence="2">
    <location>
        <begin position="402"/>
        <end position="530"/>
    </location>
</feature>
<feature type="region of interest" description="Disordered" evidence="2">
    <location>
        <begin position="545"/>
        <end position="572"/>
    </location>
</feature>
<feature type="region of interest" description="Disordered" evidence="2">
    <location>
        <begin position="593"/>
        <end position="612"/>
    </location>
</feature>
<feature type="region of interest" description="Disordered" evidence="2">
    <location>
        <begin position="621"/>
        <end position="655"/>
    </location>
</feature>
<feature type="region of interest" description="Disordered" evidence="2">
    <location>
        <begin position="740"/>
        <end position="763"/>
    </location>
</feature>
<feature type="region of interest" description="Disordered" evidence="2">
    <location>
        <begin position="1876"/>
        <end position="1958"/>
    </location>
</feature>
<feature type="compositionally biased region" description="Basic and acidic residues" evidence="2">
    <location>
        <begin position="96"/>
        <end position="114"/>
    </location>
</feature>
<feature type="compositionally biased region" description="Polar residues" evidence="2">
    <location>
        <begin position="116"/>
        <end position="125"/>
    </location>
</feature>
<feature type="compositionally biased region" description="Polar residues" evidence="2">
    <location>
        <begin position="146"/>
        <end position="156"/>
    </location>
</feature>
<feature type="compositionally biased region" description="Basic and acidic residues" evidence="2">
    <location>
        <begin position="479"/>
        <end position="490"/>
    </location>
</feature>
<feature type="compositionally biased region" description="Polar residues" evidence="2">
    <location>
        <begin position="510"/>
        <end position="520"/>
    </location>
</feature>
<feature type="compositionally biased region" description="Polar residues" evidence="2">
    <location>
        <begin position="593"/>
        <end position="602"/>
    </location>
</feature>
<feature type="compositionally biased region" description="Polar residues" evidence="2">
    <location>
        <begin position="630"/>
        <end position="655"/>
    </location>
</feature>
<feature type="compositionally biased region" description="Low complexity" evidence="2">
    <location>
        <begin position="746"/>
        <end position="760"/>
    </location>
</feature>
<feature type="compositionally biased region" description="Polar residues" evidence="2">
    <location>
        <begin position="1901"/>
        <end position="1910"/>
    </location>
</feature>
<feature type="compositionally biased region" description="Polar residues" evidence="2">
    <location>
        <begin position="1920"/>
        <end position="1929"/>
    </location>
</feature>
<feature type="compositionally biased region" description="Polar residues" evidence="2">
    <location>
        <begin position="1937"/>
        <end position="1958"/>
    </location>
</feature>
<feature type="glycosylation site" description="N-linked (GlcNAc...) asparagine" evidence="1">
    <location>
        <position position="136"/>
    </location>
</feature>
<feature type="glycosylation site" description="N-linked (GlcNAc...) asparagine" evidence="1">
    <location>
        <position position="449"/>
    </location>
</feature>
<feature type="glycosylation site" description="N-linked (GlcNAc...) asparagine" evidence="1">
    <location>
        <position position="550"/>
    </location>
</feature>
<feature type="glycosylation site" description="N-linked (GlcNAc...) asparagine" evidence="1">
    <location>
        <position position="572"/>
    </location>
</feature>
<feature type="glycosylation site" description="N-linked (GlcNAc...) asparagine" evidence="1">
    <location>
        <position position="587"/>
    </location>
</feature>
<feature type="glycosylation site" description="N-linked (GlcNAc...) asparagine" evidence="1">
    <location>
        <position position="598"/>
    </location>
</feature>
<feature type="glycosylation site" description="N-linked (GlcNAc...) asparagine" evidence="1">
    <location>
        <position position="613"/>
    </location>
</feature>
<feature type="glycosylation site" description="N-linked (GlcNAc...) asparagine" evidence="1">
    <location>
        <position position="1412"/>
    </location>
</feature>
<feature type="glycosylation site" description="N-linked (GlcNAc...) asparagine" evidence="1">
    <location>
        <position position="1553"/>
    </location>
</feature>
<feature type="glycosylation site" description="N-linked (GlcNAc...) asparagine" evidence="1">
    <location>
        <position position="1818"/>
    </location>
</feature>
<feature type="glycosylation site" description="N-linked (GlcNAc...) asparagine" evidence="1">
    <location>
        <position position="2054"/>
    </location>
</feature>
<feature type="splice variant" id="VSP_033605" description="In isoform 4." evidence="9">
    <location>
        <begin position="1"/>
        <end position="1462"/>
    </location>
</feature>
<feature type="splice variant" id="VSP_033606" description="In isoform 3." evidence="8">
    <location>
        <begin position="1"/>
        <end position="1348"/>
    </location>
</feature>
<feature type="splice variant" id="VSP_035048" description="In isoform 5." evidence="7">
    <location>
        <begin position="1"/>
        <end position="867"/>
    </location>
</feature>
<feature type="splice variant" id="VSP_033607" description="In isoform 2." evidence="6">
    <location>
        <begin position="1"/>
        <end position="701"/>
    </location>
</feature>
<feature type="splice variant" id="VSP_033608" description="In isoform 2." evidence="6">
    <original>VFLYCFPAISLLGLFPQINTFCTYLLEQIDMLF</original>
    <variation>GKIMNSHKDFFTSEKKKDKIISAISSVIFLKSW</variation>
    <location>
        <begin position="955"/>
        <end position="987"/>
    </location>
</feature>
<feature type="splice variant" id="VSP_033609" description="In isoform 2." evidence="6">
    <location>
        <begin position="988"/>
        <end position="2137"/>
    </location>
</feature>
<feature type="splice variant" id="VSP_035049" description="In isoform 5." evidence="7">
    <original>LGDLLHKLQ</original>
    <variation>VFLGYVRQK</variation>
    <location>
        <begin position="1280"/>
        <end position="1288"/>
    </location>
</feature>
<feature type="splice variant" id="VSP_035050" description="In isoform 5." evidence="7">
    <location>
        <begin position="1289"/>
        <end position="2137"/>
    </location>
</feature>
<feature type="splice variant" id="VSP_033610" description="In isoform 3." evidence="8">
    <original>RPVKFWEKNYN</original>
    <variation>MTFYPFVASSS</variation>
    <location>
        <begin position="1349"/>
        <end position="1359"/>
    </location>
</feature>
<feature type="splice variant" id="VSP_033611" description="In isoform 3." evidence="8">
    <original>HLSEPCEPPDATEQGQLHDRCLAEAVADTLGVVCRRASQEDMGLDDTASQQSVSDEQ</original>
    <variation>VRGWAGLTRTGWDGGTGSWPERGTCLAFPPFCLQNPIPFSMGLPE</variation>
    <location>
        <begin position="2081"/>
        <end position="2137"/>
    </location>
</feature>
<feature type="sequence variant" id="VAR_050479" description="In dbSNP:rs1033325.">
    <original>R</original>
    <variation>K</variation>
    <location>
        <position position="117"/>
    </location>
</feature>
<feature type="sequence variant" id="VAR_043341" description="In dbSNP:rs10910120.">
    <original>T</original>
    <variation>A</variation>
    <location>
        <position position="454"/>
    </location>
</feature>
<feature type="sequence variant" id="VAR_061498" description="In dbSNP:rs56231757." evidence="5">
    <original>S</original>
    <variation>N</variation>
    <location>
        <position position="1901"/>
    </location>
</feature>
<feature type="sequence variant" id="VAR_061499" description="In dbSNP:rs41309639.">
    <original>R</original>
    <variation>Q</variation>
    <location>
        <position position="1984"/>
    </location>
</feature>
<organism>
    <name type="scientific">Homo sapiens</name>
    <name type="common">Human</name>
    <dbReference type="NCBI Taxonomy" id="9606"/>
    <lineage>
        <taxon>Eukaryota</taxon>
        <taxon>Metazoa</taxon>
        <taxon>Chordata</taxon>
        <taxon>Craniata</taxon>
        <taxon>Vertebrata</taxon>
        <taxon>Euteleostomi</taxon>
        <taxon>Mammalia</taxon>
        <taxon>Eutheria</taxon>
        <taxon>Euarchontoglires</taxon>
        <taxon>Primates</taxon>
        <taxon>Haplorrhini</taxon>
        <taxon>Catarrhini</taxon>
        <taxon>Hominidae</taxon>
        <taxon>Homo</taxon>
    </lineage>
</organism>
<dbReference type="EMBL" id="AB007895">
    <property type="protein sequence ID" value="BAA23708.2"/>
    <property type="status" value="ALT_INIT"/>
    <property type="molecule type" value="mRNA"/>
</dbReference>
<dbReference type="EMBL" id="AK074078">
    <property type="protein sequence ID" value="BAB84904.1"/>
    <property type="status" value="ALT_INIT"/>
    <property type="molecule type" value="mRNA"/>
</dbReference>
<dbReference type="EMBL" id="AK021445">
    <property type="protein sequence ID" value="BAB13826.1"/>
    <property type="molecule type" value="mRNA"/>
</dbReference>
<dbReference type="EMBL" id="AL139342">
    <property type="protein sequence ID" value="CAI18866.1"/>
    <property type="molecule type" value="Genomic_DNA"/>
</dbReference>
<dbReference type="EMBL" id="AL122003">
    <property type="protein sequence ID" value="CAI18866.1"/>
    <property type="status" value="JOINED"/>
    <property type="molecule type" value="Genomic_DNA"/>
</dbReference>
<dbReference type="EMBL" id="AL133289">
    <property type="protein sequence ID" value="CAI18866.1"/>
    <property type="status" value="JOINED"/>
    <property type="molecule type" value="Genomic_DNA"/>
</dbReference>
<dbReference type="EMBL" id="AL133291">
    <property type="status" value="NOT_ANNOTATED_CDS"/>
    <property type="molecule type" value="Genomic_DNA"/>
</dbReference>
<dbReference type="EMBL" id="AL133380">
    <property type="status" value="NOT_ANNOTATED_CDS"/>
    <property type="molecule type" value="Genomic_DNA"/>
</dbReference>
<dbReference type="EMBL" id="AL139342">
    <property type="protein sequence ID" value="CAI18867.1"/>
    <property type="molecule type" value="Genomic_DNA"/>
</dbReference>
<dbReference type="EMBL" id="AL122003">
    <property type="protein sequence ID" value="CAI22240.1"/>
    <property type="molecule type" value="Genomic_DNA"/>
</dbReference>
<dbReference type="EMBL" id="AL139342">
    <property type="protein sequence ID" value="CAI22240.1"/>
    <property type="status" value="JOINED"/>
    <property type="molecule type" value="Genomic_DNA"/>
</dbReference>
<dbReference type="EMBL" id="AL133289">
    <property type="protein sequence ID" value="CAI22240.1"/>
    <property type="status" value="JOINED"/>
    <property type="molecule type" value="Genomic_DNA"/>
</dbReference>
<dbReference type="EMBL" id="AL122003">
    <property type="protein sequence ID" value="CAI22241.1"/>
    <property type="molecule type" value="Genomic_DNA"/>
</dbReference>
<dbReference type="EMBL" id="AL133289">
    <property type="protein sequence ID" value="CAI22241.1"/>
    <property type="status" value="JOINED"/>
    <property type="molecule type" value="Genomic_DNA"/>
</dbReference>
<dbReference type="EMBL" id="AL133289">
    <property type="protein sequence ID" value="CAI22872.1"/>
    <property type="molecule type" value="Genomic_DNA"/>
</dbReference>
<dbReference type="EMBL" id="AL139342">
    <property type="protein sequence ID" value="CAI22872.1"/>
    <property type="status" value="JOINED"/>
    <property type="molecule type" value="Genomic_DNA"/>
</dbReference>
<dbReference type="EMBL" id="AL122003">
    <property type="protein sequence ID" value="CAI22872.1"/>
    <property type="status" value="JOINED"/>
    <property type="molecule type" value="Genomic_DNA"/>
</dbReference>
<dbReference type="EMBL" id="AL133289">
    <property type="protein sequence ID" value="CAI22873.1"/>
    <property type="molecule type" value="Genomic_DNA"/>
</dbReference>
<dbReference type="EMBL" id="AL122003">
    <property type="protein sequence ID" value="CAI22873.1"/>
    <property type="status" value="JOINED"/>
    <property type="molecule type" value="Genomic_DNA"/>
</dbReference>
<dbReference type="EMBL" id="AL359819">
    <property type="status" value="NOT_ANNOTATED_CDS"/>
    <property type="molecule type" value="Genomic_DNA"/>
</dbReference>
<dbReference type="EMBL" id="BC008300">
    <property type="protein sequence ID" value="AAH08300.2"/>
    <property type="molecule type" value="mRNA"/>
</dbReference>
<dbReference type="CCDS" id="CCDS44335.1">
    <molecule id="A6NKB5-1"/>
</dbReference>
<dbReference type="RefSeq" id="NP_055616.3">
    <molecule id="A6NKB5-1"/>
    <property type="nucleotide sequence ID" value="NM_014801.3"/>
</dbReference>
<dbReference type="SMR" id="A6NKB5"/>
<dbReference type="BioGRID" id="123060">
    <property type="interactions" value="13"/>
</dbReference>
<dbReference type="FunCoup" id="A6NKB5">
    <property type="interactions" value="50"/>
</dbReference>
<dbReference type="IntAct" id="A6NKB5">
    <property type="interactions" value="5"/>
</dbReference>
<dbReference type="STRING" id="9606.ENSP00000258229"/>
<dbReference type="TCDB" id="9.A.80.1.1">
    <property type="family name" value="the pecanex-like protein 2 (pcnx2) family"/>
</dbReference>
<dbReference type="GlyCosmos" id="A6NKB5">
    <property type="glycosylation" value="11 sites, No reported glycans"/>
</dbReference>
<dbReference type="GlyGen" id="A6NKB5">
    <property type="glycosylation" value="11 sites"/>
</dbReference>
<dbReference type="iPTMnet" id="A6NKB5"/>
<dbReference type="PhosphoSitePlus" id="A6NKB5"/>
<dbReference type="BioMuta" id="PCNX2"/>
<dbReference type="jPOST" id="A6NKB5"/>
<dbReference type="MassIVE" id="A6NKB5"/>
<dbReference type="PaxDb" id="9606-ENSP00000258229"/>
<dbReference type="PeptideAtlas" id="A6NKB5"/>
<dbReference type="ProteomicsDB" id="1391">
    <molecule id="A6NKB5-1"/>
</dbReference>
<dbReference type="ProteomicsDB" id="1392">
    <molecule id="A6NKB5-2"/>
</dbReference>
<dbReference type="ProteomicsDB" id="1393">
    <molecule id="A6NKB5-3"/>
</dbReference>
<dbReference type="ProteomicsDB" id="1394">
    <molecule id="A6NKB5-4"/>
</dbReference>
<dbReference type="Antibodypedia" id="11747">
    <property type="antibodies" value="51 antibodies from 17 providers"/>
</dbReference>
<dbReference type="DNASU" id="80003"/>
<dbReference type="Ensembl" id="ENST00000258229.14">
    <molecule id="A6NKB5-1"/>
    <property type="protein sequence ID" value="ENSP00000258229.8"/>
    <property type="gene ID" value="ENSG00000135749.20"/>
</dbReference>
<dbReference type="Ensembl" id="ENST00000344698.6">
    <molecule id="A6NKB5-3"/>
    <property type="protein sequence ID" value="ENSP00000340759.2"/>
    <property type="gene ID" value="ENSG00000135749.20"/>
</dbReference>
<dbReference type="GeneID" id="80003"/>
<dbReference type="KEGG" id="hsa:80003"/>
<dbReference type="MANE-Select" id="ENST00000258229.14">
    <property type="protein sequence ID" value="ENSP00000258229.8"/>
    <property type="RefSeq nucleotide sequence ID" value="NM_014801.4"/>
    <property type="RefSeq protein sequence ID" value="NP_055616.3"/>
</dbReference>
<dbReference type="UCSC" id="uc001hvk.1">
    <molecule id="A6NKB5-1"/>
    <property type="organism name" value="human"/>
</dbReference>
<dbReference type="AGR" id="HGNC:8736"/>
<dbReference type="CTD" id="80003"/>
<dbReference type="DisGeNET" id="80003"/>
<dbReference type="GeneCards" id="PCNX2"/>
<dbReference type="HGNC" id="HGNC:8736">
    <property type="gene designation" value="PCNX2"/>
</dbReference>
<dbReference type="HPA" id="ENSG00000135749">
    <property type="expression patterns" value="Tissue enhanced (brain)"/>
</dbReference>
<dbReference type="MIM" id="617656">
    <property type="type" value="gene"/>
</dbReference>
<dbReference type="neXtProt" id="NX_A6NKB5"/>
<dbReference type="OpenTargets" id="ENSG00000135749"/>
<dbReference type="PharmGKB" id="PA33081"/>
<dbReference type="VEuPathDB" id="HostDB:ENSG00000135749"/>
<dbReference type="eggNOG" id="KOG3604">
    <property type="taxonomic scope" value="Eukaryota"/>
</dbReference>
<dbReference type="GeneTree" id="ENSGT00940000157374"/>
<dbReference type="HOGENOM" id="CLU_000602_3_0_1"/>
<dbReference type="InParanoid" id="A6NKB5"/>
<dbReference type="OMA" id="NHKIPSN"/>
<dbReference type="OrthoDB" id="10037631at2759"/>
<dbReference type="PAN-GO" id="A6NKB5">
    <property type="GO annotations" value="0 GO annotations based on evolutionary models"/>
</dbReference>
<dbReference type="PhylomeDB" id="A6NKB5"/>
<dbReference type="TreeFam" id="TF313570"/>
<dbReference type="PathwayCommons" id="A6NKB5"/>
<dbReference type="SignaLink" id="A6NKB5"/>
<dbReference type="BioGRID-ORCS" id="80003">
    <property type="hits" value="12 hits in 1131 CRISPR screens"/>
</dbReference>
<dbReference type="ChiTaRS" id="PCNX2">
    <property type="organism name" value="human"/>
</dbReference>
<dbReference type="GenomeRNAi" id="80003"/>
<dbReference type="Pharos" id="A6NKB5">
    <property type="development level" value="Tbio"/>
</dbReference>
<dbReference type="PRO" id="PR:A6NKB5"/>
<dbReference type="Proteomes" id="UP000005640">
    <property type="component" value="Chromosome 1"/>
</dbReference>
<dbReference type="RNAct" id="A6NKB5">
    <property type="molecule type" value="protein"/>
</dbReference>
<dbReference type="Bgee" id="ENSG00000135749">
    <property type="expression patterns" value="Expressed in buccal mucosa cell and 182 other cell types or tissues"/>
</dbReference>
<dbReference type="ExpressionAtlas" id="A6NKB5">
    <property type="expression patterns" value="baseline and differential"/>
</dbReference>
<dbReference type="GO" id="GO:0016020">
    <property type="term" value="C:membrane"/>
    <property type="evidence" value="ECO:0007669"/>
    <property type="project" value="UniProtKB-SubCell"/>
</dbReference>
<dbReference type="InterPro" id="IPR039797">
    <property type="entry name" value="Pecanex"/>
</dbReference>
<dbReference type="InterPro" id="IPR007735">
    <property type="entry name" value="Pecanex_C"/>
</dbReference>
<dbReference type="PANTHER" id="PTHR12372">
    <property type="entry name" value="PECANEX"/>
    <property type="match status" value="1"/>
</dbReference>
<dbReference type="PANTHER" id="PTHR12372:SF5">
    <property type="entry name" value="PECANEX-LIKE PROTEIN 2"/>
    <property type="match status" value="1"/>
</dbReference>
<dbReference type="Pfam" id="PF05041">
    <property type="entry name" value="Pecanex_C"/>
    <property type="match status" value="1"/>
</dbReference>
<reference key="1">
    <citation type="journal article" date="1997" name="DNA Res.">
        <title>Prediction of the coding sequences of unidentified human genes. VIII. 78 new cDNA clones from brain which code for large proteins in vitro.</title>
        <authorList>
            <person name="Ishikawa K."/>
            <person name="Nagase T."/>
            <person name="Nakajima D."/>
            <person name="Seki N."/>
            <person name="Ohira M."/>
            <person name="Miyajima N."/>
            <person name="Tanaka A."/>
            <person name="Kotani H."/>
            <person name="Nomura N."/>
            <person name="Ohara O."/>
        </authorList>
    </citation>
    <scope>NUCLEOTIDE SEQUENCE [LARGE SCALE MRNA] (ISOFORM 3)</scope>
    <scope>VARIANT ASN-1901</scope>
    <source>
        <tissue>Brain</tissue>
    </source>
</reference>
<reference key="2">
    <citation type="submission" date="1997-10" db="EMBL/GenBank/DDBJ databases">
        <authorList>
            <person name="Ohara O."/>
        </authorList>
    </citation>
    <scope>SEQUENCE REVISION</scope>
</reference>
<reference key="3">
    <citation type="submission" date="2002-01" db="EMBL/GenBank/DDBJ databases">
        <title>The nucleotide sequence of a long cDNA clone isolated from human spleen.</title>
        <authorList>
            <person name="Jikuya H."/>
            <person name="Takano J."/>
            <person name="Nomura N."/>
            <person name="Kikuno R."/>
            <person name="Nagase T."/>
            <person name="Ohara O."/>
        </authorList>
    </citation>
    <scope>NUCLEOTIDE SEQUENCE [LARGE SCALE MRNA] (ISOFORM 4)</scope>
    <source>
        <tissue>Spleen</tissue>
    </source>
</reference>
<reference key="4">
    <citation type="journal article" date="2004" name="Nat. Genet.">
        <title>Complete sequencing and characterization of 21,243 full-length human cDNAs.</title>
        <authorList>
            <person name="Ota T."/>
            <person name="Suzuki Y."/>
            <person name="Nishikawa T."/>
            <person name="Otsuki T."/>
            <person name="Sugiyama T."/>
            <person name="Irie R."/>
            <person name="Wakamatsu A."/>
            <person name="Hayashi K."/>
            <person name="Sato H."/>
            <person name="Nagai K."/>
            <person name="Kimura K."/>
            <person name="Makita H."/>
            <person name="Sekine M."/>
            <person name="Obayashi M."/>
            <person name="Nishi T."/>
            <person name="Shibahara T."/>
            <person name="Tanaka T."/>
            <person name="Ishii S."/>
            <person name="Yamamoto J."/>
            <person name="Saito K."/>
            <person name="Kawai Y."/>
            <person name="Isono Y."/>
            <person name="Nakamura Y."/>
            <person name="Nagahari K."/>
            <person name="Murakami K."/>
            <person name="Yasuda T."/>
            <person name="Iwayanagi T."/>
            <person name="Wagatsuma M."/>
            <person name="Shiratori A."/>
            <person name="Sudo H."/>
            <person name="Hosoiri T."/>
            <person name="Kaku Y."/>
            <person name="Kodaira H."/>
            <person name="Kondo H."/>
            <person name="Sugawara M."/>
            <person name="Takahashi M."/>
            <person name="Kanda K."/>
            <person name="Yokoi T."/>
            <person name="Furuya T."/>
            <person name="Kikkawa E."/>
            <person name="Omura Y."/>
            <person name="Abe K."/>
            <person name="Kamihara K."/>
            <person name="Katsuta N."/>
            <person name="Sato K."/>
            <person name="Tanikawa M."/>
            <person name="Yamazaki M."/>
            <person name="Ninomiya K."/>
            <person name="Ishibashi T."/>
            <person name="Yamashita H."/>
            <person name="Murakawa K."/>
            <person name="Fujimori K."/>
            <person name="Tanai H."/>
            <person name="Kimata M."/>
            <person name="Watanabe M."/>
            <person name="Hiraoka S."/>
            <person name="Chiba Y."/>
            <person name="Ishida S."/>
            <person name="Ono Y."/>
            <person name="Takiguchi S."/>
            <person name="Watanabe S."/>
            <person name="Yosida M."/>
            <person name="Hotuta T."/>
            <person name="Kusano J."/>
            <person name="Kanehori K."/>
            <person name="Takahashi-Fujii A."/>
            <person name="Hara H."/>
            <person name="Tanase T.-O."/>
            <person name="Nomura Y."/>
            <person name="Togiya S."/>
            <person name="Komai F."/>
            <person name="Hara R."/>
            <person name="Takeuchi K."/>
            <person name="Arita M."/>
            <person name="Imose N."/>
            <person name="Musashino K."/>
            <person name="Yuuki H."/>
            <person name="Oshima A."/>
            <person name="Sasaki N."/>
            <person name="Aotsuka S."/>
            <person name="Yoshikawa Y."/>
            <person name="Matsunawa H."/>
            <person name="Ichihara T."/>
            <person name="Shiohata N."/>
            <person name="Sano S."/>
            <person name="Moriya S."/>
            <person name="Momiyama H."/>
            <person name="Satoh N."/>
            <person name="Takami S."/>
            <person name="Terashima Y."/>
            <person name="Suzuki O."/>
            <person name="Nakagawa S."/>
            <person name="Senoh A."/>
            <person name="Mizoguchi H."/>
            <person name="Goto Y."/>
            <person name="Shimizu F."/>
            <person name="Wakebe H."/>
            <person name="Hishigaki H."/>
            <person name="Watanabe T."/>
            <person name="Sugiyama A."/>
            <person name="Takemoto M."/>
            <person name="Kawakami B."/>
            <person name="Yamazaki M."/>
            <person name="Watanabe K."/>
            <person name="Kumagai A."/>
            <person name="Itakura S."/>
            <person name="Fukuzumi Y."/>
            <person name="Fujimori Y."/>
            <person name="Komiyama M."/>
            <person name="Tashiro H."/>
            <person name="Tanigami A."/>
            <person name="Fujiwara T."/>
            <person name="Ono T."/>
            <person name="Yamada K."/>
            <person name="Fujii Y."/>
            <person name="Ozaki K."/>
            <person name="Hirao M."/>
            <person name="Ohmori Y."/>
            <person name="Kawabata A."/>
            <person name="Hikiji T."/>
            <person name="Kobatake N."/>
            <person name="Inagaki H."/>
            <person name="Ikema Y."/>
            <person name="Okamoto S."/>
            <person name="Okitani R."/>
            <person name="Kawakami T."/>
            <person name="Noguchi S."/>
            <person name="Itoh T."/>
            <person name="Shigeta K."/>
            <person name="Senba T."/>
            <person name="Matsumura K."/>
            <person name="Nakajima Y."/>
            <person name="Mizuno T."/>
            <person name="Morinaga M."/>
            <person name="Sasaki M."/>
            <person name="Togashi T."/>
            <person name="Oyama M."/>
            <person name="Hata H."/>
            <person name="Watanabe M."/>
            <person name="Komatsu T."/>
            <person name="Mizushima-Sugano J."/>
            <person name="Satoh T."/>
            <person name="Shirai Y."/>
            <person name="Takahashi Y."/>
            <person name="Nakagawa K."/>
            <person name="Okumura K."/>
            <person name="Nagase T."/>
            <person name="Nomura N."/>
            <person name="Kikuchi H."/>
            <person name="Masuho Y."/>
            <person name="Yamashita R."/>
            <person name="Nakai K."/>
            <person name="Yada T."/>
            <person name="Nakamura Y."/>
            <person name="Ohara O."/>
            <person name="Isogai T."/>
            <person name="Sugano S."/>
        </authorList>
    </citation>
    <scope>NUCLEOTIDE SEQUENCE [LARGE SCALE MRNA] (ISOFORM 2)</scope>
    <source>
        <tissue>Embryo</tissue>
    </source>
</reference>
<reference key="5">
    <citation type="journal article" date="2006" name="Nature">
        <title>The DNA sequence and biological annotation of human chromosome 1.</title>
        <authorList>
            <person name="Gregory S.G."/>
            <person name="Barlow K.F."/>
            <person name="McLay K.E."/>
            <person name="Kaul R."/>
            <person name="Swarbreck D."/>
            <person name="Dunham A."/>
            <person name="Scott C.E."/>
            <person name="Howe K.L."/>
            <person name="Woodfine K."/>
            <person name="Spencer C.C.A."/>
            <person name="Jones M.C."/>
            <person name="Gillson C."/>
            <person name="Searle S."/>
            <person name="Zhou Y."/>
            <person name="Kokocinski F."/>
            <person name="McDonald L."/>
            <person name="Evans R."/>
            <person name="Phillips K."/>
            <person name="Atkinson A."/>
            <person name="Cooper R."/>
            <person name="Jones C."/>
            <person name="Hall R.E."/>
            <person name="Andrews T.D."/>
            <person name="Lloyd C."/>
            <person name="Ainscough R."/>
            <person name="Almeida J.P."/>
            <person name="Ambrose K.D."/>
            <person name="Anderson F."/>
            <person name="Andrew R.W."/>
            <person name="Ashwell R.I.S."/>
            <person name="Aubin K."/>
            <person name="Babbage A.K."/>
            <person name="Bagguley C.L."/>
            <person name="Bailey J."/>
            <person name="Beasley H."/>
            <person name="Bethel G."/>
            <person name="Bird C.P."/>
            <person name="Bray-Allen S."/>
            <person name="Brown J.Y."/>
            <person name="Brown A.J."/>
            <person name="Buckley D."/>
            <person name="Burton J."/>
            <person name="Bye J."/>
            <person name="Carder C."/>
            <person name="Chapman J.C."/>
            <person name="Clark S.Y."/>
            <person name="Clarke G."/>
            <person name="Clee C."/>
            <person name="Cobley V."/>
            <person name="Collier R.E."/>
            <person name="Corby N."/>
            <person name="Coville G.J."/>
            <person name="Davies J."/>
            <person name="Deadman R."/>
            <person name="Dunn M."/>
            <person name="Earthrowl M."/>
            <person name="Ellington A.G."/>
            <person name="Errington H."/>
            <person name="Frankish A."/>
            <person name="Frankland J."/>
            <person name="French L."/>
            <person name="Garner P."/>
            <person name="Garnett J."/>
            <person name="Gay L."/>
            <person name="Ghori M.R.J."/>
            <person name="Gibson R."/>
            <person name="Gilby L.M."/>
            <person name="Gillett W."/>
            <person name="Glithero R.J."/>
            <person name="Grafham D.V."/>
            <person name="Griffiths C."/>
            <person name="Griffiths-Jones S."/>
            <person name="Grocock R."/>
            <person name="Hammond S."/>
            <person name="Harrison E.S.I."/>
            <person name="Hart E."/>
            <person name="Haugen E."/>
            <person name="Heath P.D."/>
            <person name="Holmes S."/>
            <person name="Holt K."/>
            <person name="Howden P.J."/>
            <person name="Hunt A.R."/>
            <person name="Hunt S.E."/>
            <person name="Hunter G."/>
            <person name="Isherwood J."/>
            <person name="James R."/>
            <person name="Johnson C."/>
            <person name="Johnson D."/>
            <person name="Joy A."/>
            <person name="Kay M."/>
            <person name="Kershaw J.K."/>
            <person name="Kibukawa M."/>
            <person name="Kimberley A.M."/>
            <person name="King A."/>
            <person name="Knights A.J."/>
            <person name="Lad H."/>
            <person name="Laird G."/>
            <person name="Lawlor S."/>
            <person name="Leongamornlert D.A."/>
            <person name="Lloyd D.M."/>
            <person name="Loveland J."/>
            <person name="Lovell J."/>
            <person name="Lush M.J."/>
            <person name="Lyne R."/>
            <person name="Martin S."/>
            <person name="Mashreghi-Mohammadi M."/>
            <person name="Matthews L."/>
            <person name="Matthews N.S.W."/>
            <person name="McLaren S."/>
            <person name="Milne S."/>
            <person name="Mistry S."/>
            <person name="Moore M.J.F."/>
            <person name="Nickerson T."/>
            <person name="O'Dell C.N."/>
            <person name="Oliver K."/>
            <person name="Palmeiri A."/>
            <person name="Palmer S.A."/>
            <person name="Parker A."/>
            <person name="Patel D."/>
            <person name="Pearce A.V."/>
            <person name="Peck A.I."/>
            <person name="Pelan S."/>
            <person name="Phelps K."/>
            <person name="Phillimore B.J."/>
            <person name="Plumb R."/>
            <person name="Rajan J."/>
            <person name="Raymond C."/>
            <person name="Rouse G."/>
            <person name="Saenphimmachak C."/>
            <person name="Sehra H.K."/>
            <person name="Sheridan E."/>
            <person name="Shownkeen R."/>
            <person name="Sims S."/>
            <person name="Skuce C.D."/>
            <person name="Smith M."/>
            <person name="Steward C."/>
            <person name="Subramanian S."/>
            <person name="Sycamore N."/>
            <person name="Tracey A."/>
            <person name="Tromans A."/>
            <person name="Van Helmond Z."/>
            <person name="Wall M."/>
            <person name="Wallis J.M."/>
            <person name="White S."/>
            <person name="Whitehead S.L."/>
            <person name="Wilkinson J.E."/>
            <person name="Willey D.L."/>
            <person name="Williams H."/>
            <person name="Wilming L."/>
            <person name="Wray P.W."/>
            <person name="Wu Z."/>
            <person name="Coulson A."/>
            <person name="Vaudin M."/>
            <person name="Sulston J.E."/>
            <person name="Durbin R.M."/>
            <person name="Hubbard T."/>
            <person name="Wooster R."/>
            <person name="Dunham I."/>
            <person name="Carter N.P."/>
            <person name="McVean G."/>
            <person name="Ross M.T."/>
            <person name="Harrow J."/>
            <person name="Olson M.V."/>
            <person name="Beck S."/>
            <person name="Rogers J."/>
            <person name="Bentley D.R."/>
        </authorList>
    </citation>
    <scope>NUCLEOTIDE SEQUENCE [LARGE SCALE GENOMIC DNA]</scope>
</reference>
<reference key="6">
    <citation type="journal article" date="2004" name="Genome Res.">
        <title>The status, quality, and expansion of the NIH full-length cDNA project: the Mammalian Gene Collection (MGC).</title>
        <authorList>
            <consortium name="The MGC Project Team"/>
        </authorList>
    </citation>
    <scope>NUCLEOTIDE SEQUENCE [LARGE SCALE MRNA] (ISOFORM 5)</scope>
    <source>
        <tissue>Colon</tissue>
    </source>
</reference>
<reference key="7">
    <citation type="journal article" date="2002" name="Oncogene">
        <title>Identification of MARCKS, FLJ11383 and TAF1B as putative novel target genes in colorectal carcinomas with microsatellite instability.</title>
        <authorList>
            <person name="Kim N.-G."/>
            <person name="Rhee H."/>
            <person name="Li L.S."/>
            <person name="Kim H."/>
            <person name="Lee J.-S."/>
            <person name="Kim J.-H."/>
            <person name="Kim N.K."/>
            <person name="Kim H."/>
        </authorList>
    </citation>
    <scope>FUNCTION</scope>
</reference>
<reference key="8">
    <citation type="journal article" date="2003" name="Am. J. Pathol.">
        <title>Chromosomal imbalances in the colorectal carcinomas with microsatellite instability.</title>
        <authorList>
            <person name="Li L.S."/>
            <person name="Kim N.-G."/>
            <person name="Kim S.H."/>
            <person name="Park C."/>
            <person name="Kim H."/>
            <person name="Kang H.J."/>
            <person name="Koh K.H."/>
            <person name="Kim S.N."/>
            <person name="Kim W.H."/>
            <person name="Kim N.K."/>
            <person name="Kim H."/>
        </authorList>
    </citation>
    <scope>FUNCTION</scope>
</reference>
<evidence type="ECO:0000255" key="1"/>
<evidence type="ECO:0000256" key="2">
    <source>
        <dbReference type="SAM" id="MobiDB-lite"/>
    </source>
</evidence>
<evidence type="ECO:0000269" key="3">
    <source>
    </source>
</evidence>
<evidence type="ECO:0000269" key="4">
    <source>
    </source>
</evidence>
<evidence type="ECO:0000269" key="5">
    <source>
    </source>
</evidence>
<evidence type="ECO:0000303" key="6">
    <source>
    </source>
</evidence>
<evidence type="ECO:0000303" key="7">
    <source>
    </source>
</evidence>
<evidence type="ECO:0000303" key="8">
    <source>
    </source>
</evidence>
<evidence type="ECO:0000303" key="9">
    <source ref="3"/>
</evidence>
<evidence type="ECO:0000305" key="10"/>
<evidence type="ECO:0000312" key="11">
    <source>
        <dbReference type="HGNC" id="HGNC:8736"/>
    </source>
</evidence>
<accession>A6NKB5</accession>
<accession>O43162</accession>
<accession>Q5T9Z8</accession>
<accession>Q5TDF1</accession>
<accession>Q8TEP4</accession>
<accession>Q96HP9</accession>
<accession>Q9HAL8</accession>
<protein>
    <recommendedName>
        <fullName>Pecanex-like protein 2</fullName>
    </recommendedName>
    <alternativeName>
        <fullName evidence="11">Pecanex homolog protein 2</fullName>
    </alternativeName>
</protein>